<organism>
    <name type="scientific">Thermotoga maritima (strain ATCC 43589 / DSM 3109 / JCM 10099 / NBRC 100826 / MSB8)</name>
    <dbReference type="NCBI Taxonomy" id="243274"/>
    <lineage>
        <taxon>Bacteria</taxon>
        <taxon>Thermotogati</taxon>
        <taxon>Thermotogota</taxon>
        <taxon>Thermotogae</taxon>
        <taxon>Thermotogales</taxon>
        <taxon>Thermotogaceae</taxon>
        <taxon>Thermotoga</taxon>
    </lineage>
</organism>
<comment type="function">
    <text evidence="1">Cell wall formation. Adds enolpyruvyl to UDP-N-acetylglucosamine.</text>
</comment>
<comment type="catalytic activity">
    <reaction evidence="1">
        <text>phosphoenolpyruvate + UDP-N-acetyl-alpha-D-glucosamine = UDP-N-acetyl-3-O-(1-carboxyvinyl)-alpha-D-glucosamine + phosphate</text>
        <dbReference type="Rhea" id="RHEA:18681"/>
        <dbReference type="ChEBI" id="CHEBI:43474"/>
        <dbReference type="ChEBI" id="CHEBI:57705"/>
        <dbReference type="ChEBI" id="CHEBI:58702"/>
        <dbReference type="ChEBI" id="CHEBI:68483"/>
        <dbReference type="EC" id="2.5.1.7"/>
    </reaction>
</comment>
<comment type="pathway">
    <text evidence="1">Cell wall biogenesis; peptidoglycan biosynthesis.</text>
</comment>
<comment type="subcellular location">
    <subcellularLocation>
        <location evidence="1">Cytoplasm</location>
    </subcellularLocation>
</comment>
<comment type="similarity">
    <text evidence="1">Belongs to the EPSP synthase family. MurA subfamily.</text>
</comment>
<gene>
    <name evidence="1" type="primary">murA</name>
    <name type="ordered locus">TM_0108</name>
</gene>
<proteinExistence type="inferred from homology"/>
<reference key="1">
    <citation type="journal article" date="1999" name="Nature">
        <title>Evidence for lateral gene transfer between Archaea and Bacteria from genome sequence of Thermotoga maritima.</title>
        <authorList>
            <person name="Nelson K.E."/>
            <person name="Clayton R.A."/>
            <person name="Gill S.R."/>
            <person name="Gwinn M.L."/>
            <person name="Dodson R.J."/>
            <person name="Haft D.H."/>
            <person name="Hickey E.K."/>
            <person name="Peterson J.D."/>
            <person name="Nelson W.C."/>
            <person name="Ketchum K.A."/>
            <person name="McDonald L.A."/>
            <person name="Utterback T.R."/>
            <person name="Malek J.A."/>
            <person name="Linher K.D."/>
            <person name="Garrett M.M."/>
            <person name="Stewart A.M."/>
            <person name="Cotton M.D."/>
            <person name="Pratt M.S."/>
            <person name="Phillips C.A."/>
            <person name="Richardson D.L."/>
            <person name="Heidelberg J.F."/>
            <person name="Sutton G.G."/>
            <person name="Fleischmann R.D."/>
            <person name="Eisen J.A."/>
            <person name="White O."/>
            <person name="Salzberg S.L."/>
            <person name="Smith H.O."/>
            <person name="Venter J.C."/>
            <person name="Fraser C.M."/>
        </authorList>
    </citation>
    <scope>NUCLEOTIDE SEQUENCE [LARGE SCALE GENOMIC DNA]</scope>
    <source>
        <strain>ATCC 43589 / DSM 3109 / JCM 10099 / NBRC 100826 / MSB8</strain>
    </source>
</reference>
<protein>
    <recommendedName>
        <fullName evidence="1">UDP-N-acetylglucosamine 1-carboxyvinyltransferase</fullName>
        <ecNumber evidence="1">2.5.1.7</ecNumber>
    </recommendedName>
    <alternativeName>
        <fullName evidence="1">Enoylpyruvate transferase</fullName>
    </alternativeName>
    <alternativeName>
        <fullName evidence="1">UDP-N-acetylglucosamine enolpyruvyl transferase</fullName>
        <shortName evidence="1">EPT</shortName>
    </alternativeName>
</protein>
<sequence length="421" mass="45965">MGKLVVQGGAVLEGEVEISGSKNAALPIMAAAILCDEEVILKNVPRLQDVFVMIDILRSIGFRVEFEENELKIKRENDISQEVPYELVRKMRASFNVLGPIAVRTGRAKVALPGGCSIGVRPVDFHLEGLKKMGFSIKVEHGFVEACFERRIDYVTITLPFPSVGATEHLMTTAALLKGARVVIENAAMEPEIVDLQNFINRMGGHIEGAGTSRIVIEGVEKMQGVEYSIIPDRIEAGTYLVAIAASRGKGLVKNVNPDHLTNFFEKLEETGAKLKVLGNEVEIEMRERPKAVDVTTNPYPGFPTDLQPQMMAYLSTASGVSVITENVFKTRFLHVDELKRMGADIEVSGNVAIVKGVEKLSGAPVEGTDLRATAALLIAGIIADGVTEISNVEHIFRGYEDVIDKFSELGAKIEYVEKEN</sequence>
<accession>Q9WXW3</accession>
<feature type="chain" id="PRO_0000178943" description="UDP-N-acetylglucosamine 1-carboxyvinyltransferase">
    <location>
        <begin position="1"/>
        <end position="421"/>
    </location>
</feature>
<feature type="active site" description="Proton donor" evidence="1">
    <location>
        <position position="116"/>
    </location>
</feature>
<feature type="binding site" evidence="1">
    <location>
        <begin position="22"/>
        <end position="23"/>
    </location>
    <ligand>
        <name>phosphoenolpyruvate</name>
        <dbReference type="ChEBI" id="CHEBI:58702"/>
    </ligand>
</feature>
<feature type="binding site" evidence="1">
    <location>
        <position position="92"/>
    </location>
    <ligand>
        <name>UDP-N-acetyl-alpha-D-glucosamine</name>
        <dbReference type="ChEBI" id="CHEBI:57705"/>
    </ligand>
</feature>
<feature type="binding site" evidence="1">
    <location>
        <position position="306"/>
    </location>
    <ligand>
        <name>UDP-N-acetyl-alpha-D-glucosamine</name>
        <dbReference type="ChEBI" id="CHEBI:57705"/>
    </ligand>
</feature>
<feature type="binding site" evidence="1">
    <location>
        <position position="328"/>
    </location>
    <ligand>
        <name>UDP-N-acetyl-alpha-D-glucosamine</name>
        <dbReference type="ChEBI" id="CHEBI:57705"/>
    </ligand>
</feature>
<feature type="modified residue" description="2-(S-cysteinyl)pyruvic acid O-phosphothioketal" evidence="1">
    <location>
        <position position="116"/>
    </location>
</feature>
<evidence type="ECO:0000255" key="1">
    <source>
        <dbReference type="HAMAP-Rule" id="MF_00111"/>
    </source>
</evidence>
<keyword id="KW-0131">Cell cycle</keyword>
<keyword id="KW-0132">Cell division</keyword>
<keyword id="KW-0133">Cell shape</keyword>
<keyword id="KW-0961">Cell wall biogenesis/degradation</keyword>
<keyword id="KW-0963">Cytoplasm</keyword>
<keyword id="KW-0573">Peptidoglycan synthesis</keyword>
<keyword id="KW-0670">Pyruvate</keyword>
<keyword id="KW-1185">Reference proteome</keyword>
<keyword id="KW-0808">Transferase</keyword>
<name>MURA_THEMA</name>
<dbReference type="EC" id="2.5.1.7" evidence="1"/>
<dbReference type="EMBL" id="AE000512">
    <property type="protein sequence ID" value="AAD35202.1"/>
    <property type="molecule type" value="Genomic_DNA"/>
</dbReference>
<dbReference type="PIR" id="C72416">
    <property type="entry name" value="C72416"/>
</dbReference>
<dbReference type="RefSeq" id="NP_227924.1">
    <property type="nucleotide sequence ID" value="NC_000853.1"/>
</dbReference>
<dbReference type="RefSeq" id="WP_004082675.1">
    <property type="nucleotide sequence ID" value="NZ_CP011107.1"/>
</dbReference>
<dbReference type="SMR" id="Q9WXW3"/>
<dbReference type="FunCoup" id="Q9WXW3">
    <property type="interactions" value="302"/>
</dbReference>
<dbReference type="STRING" id="243274.TM_0108"/>
<dbReference type="PaxDb" id="243274-THEMA_04265"/>
<dbReference type="EnsemblBacteria" id="AAD35202">
    <property type="protein sequence ID" value="AAD35202"/>
    <property type="gene ID" value="TM_0108"/>
</dbReference>
<dbReference type="KEGG" id="tma:TM0108"/>
<dbReference type="KEGG" id="tmi:THEMA_04265"/>
<dbReference type="KEGG" id="tmm:Tmari_0105"/>
<dbReference type="KEGG" id="tmw:THMA_0104"/>
<dbReference type="eggNOG" id="COG0766">
    <property type="taxonomic scope" value="Bacteria"/>
</dbReference>
<dbReference type="InParanoid" id="Q9WXW3"/>
<dbReference type="OrthoDB" id="9803760at2"/>
<dbReference type="UniPathway" id="UPA00219"/>
<dbReference type="Proteomes" id="UP000008183">
    <property type="component" value="Chromosome"/>
</dbReference>
<dbReference type="GO" id="GO:0005737">
    <property type="term" value="C:cytoplasm"/>
    <property type="evidence" value="ECO:0007669"/>
    <property type="project" value="UniProtKB-SubCell"/>
</dbReference>
<dbReference type="GO" id="GO:0008760">
    <property type="term" value="F:UDP-N-acetylglucosamine 1-carboxyvinyltransferase activity"/>
    <property type="evidence" value="ECO:0007669"/>
    <property type="project" value="UniProtKB-UniRule"/>
</dbReference>
<dbReference type="GO" id="GO:0051301">
    <property type="term" value="P:cell division"/>
    <property type="evidence" value="ECO:0007669"/>
    <property type="project" value="UniProtKB-KW"/>
</dbReference>
<dbReference type="GO" id="GO:0071555">
    <property type="term" value="P:cell wall organization"/>
    <property type="evidence" value="ECO:0007669"/>
    <property type="project" value="UniProtKB-KW"/>
</dbReference>
<dbReference type="GO" id="GO:0009252">
    <property type="term" value="P:peptidoglycan biosynthetic process"/>
    <property type="evidence" value="ECO:0007669"/>
    <property type="project" value="UniProtKB-UniRule"/>
</dbReference>
<dbReference type="GO" id="GO:0008360">
    <property type="term" value="P:regulation of cell shape"/>
    <property type="evidence" value="ECO:0007669"/>
    <property type="project" value="UniProtKB-KW"/>
</dbReference>
<dbReference type="GO" id="GO:0019277">
    <property type="term" value="P:UDP-N-acetylgalactosamine biosynthetic process"/>
    <property type="evidence" value="ECO:0007669"/>
    <property type="project" value="InterPro"/>
</dbReference>
<dbReference type="CDD" id="cd01555">
    <property type="entry name" value="UdpNAET"/>
    <property type="match status" value="1"/>
</dbReference>
<dbReference type="Gene3D" id="3.65.10.10">
    <property type="entry name" value="Enolpyruvate transferase domain"/>
    <property type="match status" value="2"/>
</dbReference>
<dbReference type="HAMAP" id="MF_00111">
    <property type="entry name" value="MurA"/>
    <property type="match status" value="1"/>
</dbReference>
<dbReference type="InterPro" id="IPR001986">
    <property type="entry name" value="Enolpyruvate_Tfrase_dom"/>
</dbReference>
<dbReference type="InterPro" id="IPR036968">
    <property type="entry name" value="Enolpyruvate_Tfrase_sf"/>
</dbReference>
<dbReference type="InterPro" id="IPR050068">
    <property type="entry name" value="MurA_subfamily"/>
</dbReference>
<dbReference type="InterPro" id="IPR013792">
    <property type="entry name" value="RNA3'P_cycl/enolpyr_Trfase_a/b"/>
</dbReference>
<dbReference type="InterPro" id="IPR005750">
    <property type="entry name" value="UDP_GlcNAc_COvinyl_MurA"/>
</dbReference>
<dbReference type="NCBIfam" id="TIGR01072">
    <property type="entry name" value="murA"/>
    <property type="match status" value="1"/>
</dbReference>
<dbReference type="NCBIfam" id="NF006873">
    <property type="entry name" value="PRK09369.1"/>
    <property type="match status" value="1"/>
</dbReference>
<dbReference type="PANTHER" id="PTHR43783">
    <property type="entry name" value="UDP-N-ACETYLGLUCOSAMINE 1-CARBOXYVINYLTRANSFERASE"/>
    <property type="match status" value="1"/>
</dbReference>
<dbReference type="PANTHER" id="PTHR43783:SF1">
    <property type="entry name" value="UDP-N-ACETYLGLUCOSAMINE 1-CARBOXYVINYLTRANSFERASE"/>
    <property type="match status" value="1"/>
</dbReference>
<dbReference type="Pfam" id="PF00275">
    <property type="entry name" value="EPSP_synthase"/>
    <property type="match status" value="1"/>
</dbReference>
<dbReference type="SUPFAM" id="SSF55205">
    <property type="entry name" value="EPT/RTPC-like"/>
    <property type="match status" value="1"/>
</dbReference>